<sequence>MANIKSAIKRVEVNEKKRVSNSKQLSAMRTEVKRVEKAVEANDTDNAKSLFQSASKHIDKAAQKGIIHQNAANRQKSRLANKINAL</sequence>
<organism>
    <name type="scientific">Oceanobacillus iheyensis (strain DSM 14371 / CIP 107618 / JCM 11309 / KCTC 3954 / HTE831)</name>
    <dbReference type="NCBI Taxonomy" id="221109"/>
    <lineage>
        <taxon>Bacteria</taxon>
        <taxon>Bacillati</taxon>
        <taxon>Bacillota</taxon>
        <taxon>Bacilli</taxon>
        <taxon>Bacillales</taxon>
        <taxon>Bacillaceae</taxon>
        <taxon>Oceanobacillus</taxon>
    </lineage>
</organism>
<accession>Q8EPW0</accession>
<feature type="chain" id="PRO_0000168002" description="Small ribosomal subunit protein bS20">
    <location>
        <begin position="1"/>
        <end position="86"/>
    </location>
</feature>
<proteinExistence type="inferred from homology"/>
<gene>
    <name evidence="1" type="primary">rpsT</name>
    <name type="ordered locus">OB1976</name>
</gene>
<reference key="1">
    <citation type="journal article" date="2002" name="Nucleic Acids Res.">
        <title>Genome sequence of Oceanobacillus iheyensis isolated from the Iheya Ridge and its unexpected adaptive capabilities to extreme environments.</title>
        <authorList>
            <person name="Takami H."/>
            <person name="Takaki Y."/>
            <person name="Uchiyama I."/>
        </authorList>
    </citation>
    <scope>NUCLEOTIDE SEQUENCE [LARGE SCALE GENOMIC DNA]</scope>
    <source>
        <strain>DSM 14371 / CIP 107618 / JCM 11309 / KCTC 3954 / HTE831</strain>
    </source>
</reference>
<protein>
    <recommendedName>
        <fullName evidence="1">Small ribosomal subunit protein bS20</fullName>
    </recommendedName>
    <alternativeName>
        <fullName evidence="2">30S ribosomal protein S20</fullName>
    </alternativeName>
</protein>
<name>RS20_OCEIH</name>
<comment type="function">
    <text evidence="1">Binds directly to 16S ribosomal RNA.</text>
</comment>
<comment type="similarity">
    <text evidence="1">Belongs to the bacterial ribosomal protein bS20 family.</text>
</comment>
<dbReference type="EMBL" id="BA000028">
    <property type="protein sequence ID" value="BAC13932.1"/>
    <property type="molecule type" value="Genomic_DNA"/>
</dbReference>
<dbReference type="RefSeq" id="WP_011066373.1">
    <property type="nucleotide sequence ID" value="NC_004193.1"/>
</dbReference>
<dbReference type="SMR" id="Q8EPW0"/>
<dbReference type="STRING" id="221109.gene:10734222"/>
<dbReference type="KEGG" id="oih:OB1976"/>
<dbReference type="eggNOG" id="COG0268">
    <property type="taxonomic scope" value="Bacteria"/>
</dbReference>
<dbReference type="HOGENOM" id="CLU_160655_5_0_9"/>
<dbReference type="OrthoDB" id="9808392at2"/>
<dbReference type="PhylomeDB" id="Q8EPW0"/>
<dbReference type="Proteomes" id="UP000000822">
    <property type="component" value="Chromosome"/>
</dbReference>
<dbReference type="GO" id="GO:0005829">
    <property type="term" value="C:cytosol"/>
    <property type="evidence" value="ECO:0007669"/>
    <property type="project" value="TreeGrafter"/>
</dbReference>
<dbReference type="GO" id="GO:0015935">
    <property type="term" value="C:small ribosomal subunit"/>
    <property type="evidence" value="ECO:0007669"/>
    <property type="project" value="TreeGrafter"/>
</dbReference>
<dbReference type="GO" id="GO:0070181">
    <property type="term" value="F:small ribosomal subunit rRNA binding"/>
    <property type="evidence" value="ECO:0007669"/>
    <property type="project" value="TreeGrafter"/>
</dbReference>
<dbReference type="GO" id="GO:0003735">
    <property type="term" value="F:structural constituent of ribosome"/>
    <property type="evidence" value="ECO:0007669"/>
    <property type="project" value="InterPro"/>
</dbReference>
<dbReference type="GO" id="GO:0006412">
    <property type="term" value="P:translation"/>
    <property type="evidence" value="ECO:0007669"/>
    <property type="project" value="UniProtKB-UniRule"/>
</dbReference>
<dbReference type="FunFam" id="1.20.58.110:FF:000001">
    <property type="entry name" value="30S ribosomal protein S20"/>
    <property type="match status" value="1"/>
</dbReference>
<dbReference type="Gene3D" id="1.20.58.110">
    <property type="entry name" value="Ribosomal protein S20"/>
    <property type="match status" value="1"/>
</dbReference>
<dbReference type="HAMAP" id="MF_00500">
    <property type="entry name" value="Ribosomal_bS20"/>
    <property type="match status" value="1"/>
</dbReference>
<dbReference type="InterPro" id="IPR002583">
    <property type="entry name" value="Ribosomal_bS20"/>
</dbReference>
<dbReference type="InterPro" id="IPR036510">
    <property type="entry name" value="Ribosomal_bS20_sf"/>
</dbReference>
<dbReference type="NCBIfam" id="TIGR00029">
    <property type="entry name" value="S20"/>
    <property type="match status" value="1"/>
</dbReference>
<dbReference type="PANTHER" id="PTHR33398">
    <property type="entry name" value="30S RIBOSOMAL PROTEIN S20"/>
    <property type="match status" value="1"/>
</dbReference>
<dbReference type="PANTHER" id="PTHR33398:SF1">
    <property type="entry name" value="SMALL RIBOSOMAL SUBUNIT PROTEIN BS20C"/>
    <property type="match status" value="1"/>
</dbReference>
<dbReference type="Pfam" id="PF01649">
    <property type="entry name" value="Ribosomal_S20p"/>
    <property type="match status" value="1"/>
</dbReference>
<dbReference type="SUPFAM" id="SSF46992">
    <property type="entry name" value="Ribosomal protein S20"/>
    <property type="match status" value="1"/>
</dbReference>
<evidence type="ECO:0000255" key="1">
    <source>
        <dbReference type="HAMAP-Rule" id="MF_00500"/>
    </source>
</evidence>
<evidence type="ECO:0000305" key="2"/>
<keyword id="KW-1185">Reference proteome</keyword>
<keyword id="KW-0687">Ribonucleoprotein</keyword>
<keyword id="KW-0689">Ribosomal protein</keyword>
<keyword id="KW-0694">RNA-binding</keyword>
<keyword id="KW-0699">rRNA-binding</keyword>